<name>RFA1_SCHPO</name>
<protein>
    <recommendedName>
        <fullName>Replication factor A protein 1</fullName>
    </recommendedName>
    <alternativeName>
        <fullName>Single-stranded DNA-binding protein p68 subunit</fullName>
    </alternativeName>
</protein>
<evidence type="ECO:0000250" key="1">
    <source>
        <dbReference type="UniProtKB" id="P27694"/>
    </source>
</evidence>
<evidence type="ECO:0000255" key="2"/>
<evidence type="ECO:0000256" key="3">
    <source>
        <dbReference type="SAM" id="MobiDB-lite"/>
    </source>
</evidence>
<evidence type="ECO:0000305" key="4"/>
<organism>
    <name type="scientific">Schizosaccharomyces pombe (strain 972 / ATCC 24843)</name>
    <name type="common">Fission yeast</name>
    <dbReference type="NCBI Taxonomy" id="284812"/>
    <lineage>
        <taxon>Eukaryota</taxon>
        <taxon>Fungi</taxon>
        <taxon>Dikarya</taxon>
        <taxon>Ascomycota</taxon>
        <taxon>Taphrinomycotina</taxon>
        <taxon>Schizosaccharomycetes</taxon>
        <taxon>Schizosaccharomycetales</taxon>
        <taxon>Schizosaccharomycetaceae</taxon>
        <taxon>Schizosaccharomyces</taxon>
    </lineage>
</organism>
<keyword id="KW-0903">Direct protein sequencing</keyword>
<keyword id="KW-0235">DNA replication</keyword>
<keyword id="KW-0238">DNA-binding</keyword>
<keyword id="KW-0479">Metal-binding</keyword>
<keyword id="KW-0539">Nucleus</keyword>
<keyword id="KW-1185">Reference proteome</keyword>
<keyword id="KW-0862">Zinc</keyword>
<keyword id="KW-0863">Zinc-finger</keyword>
<comment type="function">
    <text evidence="1">As part of the replication protein A (RPA/RP-A), a single-stranded DNA-binding heterotrimeric complex, may play an essential role in DNA replication, recombination and repair. Binds and stabilizes single-stranded DNA intermediates, preventing complementary DNA reannealing and recruiting different proteins involved in DNA metabolism.</text>
</comment>
<comment type="subunit">
    <text>Component of the heterotrimeric canonical replication protein A complex (RPA).</text>
</comment>
<comment type="interaction">
    <interactant intactId="EBI-966394">
        <id>Q92372</id>
    </interactant>
    <interactant intactId="EBI-966242">
        <id>P36592</id>
        <label>rad22</label>
    </interactant>
    <organismsDiffer>false</organismsDiffer>
    <experiments>2</experiments>
</comment>
<comment type="subcellular location">
    <subcellularLocation>
        <location>Nucleus</location>
    </subcellularLocation>
</comment>
<comment type="similarity">
    <text evidence="4">Belongs to the replication factor A protein 1 family.</text>
</comment>
<reference key="1">
    <citation type="journal article" date="1996" name="J. Biol. Chem.">
        <title>Purification, gene cloning, and reconstitution of the heterotrimeric single-stranded DNA-binding protein from Schizosaccharomyces pombe.</title>
        <authorList>
            <person name="Ishiai M."/>
            <person name="Sanchez J.P."/>
            <person name="Amin A.A."/>
            <person name="Murakami Y."/>
            <person name="Hurwitz J."/>
        </authorList>
    </citation>
    <scope>NUCLEOTIDE SEQUENCE [MRNA]</scope>
    <scope>PARTIAL PROTEIN SEQUENCE</scope>
</reference>
<reference key="2">
    <citation type="journal article" date="1997" name="Mol. Cell. Biol.">
        <title>The Schizosaccharomyces pombe rad11+ gene encodes the large subunit of replication protein A.</title>
        <authorList>
            <person name="Parker A.E."/>
            <person name="Clyne R.K."/>
            <person name="Carr A.M."/>
            <person name="Kelly T.J."/>
        </authorList>
    </citation>
    <scope>NUCLEOTIDE SEQUENCE [GENOMIC DNA]</scope>
</reference>
<reference key="3">
    <citation type="journal article" date="2002" name="Nature">
        <title>The genome sequence of Schizosaccharomyces pombe.</title>
        <authorList>
            <person name="Wood V."/>
            <person name="Gwilliam R."/>
            <person name="Rajandream M.A."/>
            <person name="Lyne M.H."/>
            <person name="Lyne R."/>
            <person name="Stewart A."/>
            <person name="Sgouros J.G."/>
            <person name="Peat N."/>
            <person name="Hayles J."/>
            <person name="Baker S.G."/>
            <person name="Basham D."/>
            <person name="Bowman S."/>
            <person name="Brooks K."/>
            <person name="Brown D."/>
            <person name="Brown S."/>
            <person name="Chillingworth T."/>
            <person name="Churcher C.M."/>
            <person name="Collins M."/>
            <person name="Connor R."/>
            <person name="Cronin A."/>
            <person name="Davis P."/>
            <person name="Feltwell T."/>
            <person name="Fraser A."/>
            <person name="Gentles S."/>
            <person name="Goble A."/>
            <person name="Hamlin N."/>
            <person name="Harris D.E."/>
            <person name="Hidalgo J."/>
            <person name="Hodgson G."/>
            <person name="Holroyd S."/>
            <person name="Hornsby T."/>
            <person name="Howarth S."/>
            <person name="Huckle E.J."/>
            <person name="Hunt S."/>
            <person name="Jagels K."/>
            <person name="James K.D."/>
            <person name="Jones L."/>
            <person name="Jones M."/>
            <person name="Leather S."/>
            <person name="McDonald S."/>
            <person name="McLean J."/>
            <person name="Mooney P."/>
            <person name="Moule S."/>
            <person name="Mungall K.L."/>
            <person name="Murphy L.D."/>
            <person name="Niblett D."/>
            <person name="Odell C."/>
            <person name="Oliver K."/>
            <person name="O'Neil S."/>
            <person name="Pearson D."/>
            <person name="Quail M.A."/>
            <person name="Rabbinowitsch E."/>
            <person name="Rutherford K.M."/>
            <person name="Rutter S."/>
            <person name="Saunders D."/>
            <person name="Seeger K."/>
            <person name="Sharp S."/>
            <person name="Skelton J."/>
            <person name="Simmonds M.N."/>
            <person name="Squares R."/>
            <person name="Squares S."/>
            <person name="Stevens K."/>
            <person name="Taylor K."/>
            <person name="Taylor R.G."/>
            <person name="Tivey A."/>
            <person name="Walsh S.V."/>
            <person name="Warren T."/>
            <person name="Whitehead S."/>
            <person name="Woodward J.R."/>
            <person name="Volckaert G."/>
            <person name="Aert R."/>
            <person name="Robben J."/>
            <person name="Grymonprez B."/>
            <person name="Weltjens I."/>
            <person name="Vanstreels E."/>
            <person name="Rieger M."/>
            <person name="Schaefer M."/>
            <person name="Mueller-Auer S."/>
            <person name="Gabel C."/>
            <person name="Fuchs M."/>
            <person name="Duesterhoeft A."/>
            <person name="Fritzc C."/>
            <person name="Holzer E."/>
            <person name="Moestl D."/>
            <person name="Hilbert H."/>
            <person name="Borzym K."/>
            <person name="Langer I."/>
            <person name="Beck A."/>
            <person name="Lehrach H."/>
            <person name="Reinhardt R."/>
            <person name="Pohl T.M."/>
            <person name="Eger P."/>
            <person name="Zimmermann W."/>
            <person name="Wedler H."/>
            <person name="Wambutt R."/>
            <person name="Purnelle B."/>
            <person name="Goffeau A."/>
            <person name="Cadieu E."/>
            <person name="Dreano S."/>
            <person name="Gloux S."/>
            <person name="Lelaure V."/>
            <person name="Mottier S."/>
            <person name="Galibert F."/>
            <person name="Aves S.J."/>
            <person name="Xiang Z."/>
            <person name="Hunt C."/>
            <person name="Moore K."/>
            <person name="Hurst S.M."/>
            <person name="Lucas M."/>
            <person name="Rochet M."/>
            <person name="Gaillardin C."/>
            <person name="Tallada V.A."/>
            <person name="Garzon A."/>
            <person name="Thode G."/>
            <person name="Daga R.R."/>
            <person name="Cruzado L."/>
            <person name="Jimenez J."/>
            <person name="Sanchez M."/>
            <person name="del Rey F."/>
            <person name="Benito J."/>
            <person name="Dominguez A."/>
            <person name="Revuelta J.L."/>
            <person name="Moreno S."/>
            <person name="Armstrong J."/>
            <person name="Forsburg S.L."/>
            <person name="Cerutti L."/>
            <person name="Lowe T."/>
            <person name="McCombie W.R."/>
            <person name="Paulsen I."/>
            <person name="Potashkin J."/>
            <person name="Shpakovski G.V."/>
            <person name="Ussery D."/>
            <person name="Barrell B.G."/>
            <person name="Nurse P."/>
        </authorList>
    </citation>
    <scope>NUCLEOTIDE SEQUENCE [LARGE SCALE GENOMIC DNA]</scope>
    <source>
        <strain>972 / ATCC 24843</strain>
    </source>
</reference>
<proteinExistence type="evidence at protein level"/>
<accession>Q92372</accession>
<accession>Q92382</accession>
<gene>
    <name type="primary">ssb1</name>
    <name type="synonym">rad11</name>
    <name type="synonym">rpa1</name>
    <name type="ORF">SPBC660.13c</name>
</gene>
<dbReference type="EMBL" id="U59385">
    <property type="protein sequence ID" value="AAC49437.1"/>
    <property type="molecule type" value="mRNA"/>
</dbReference>
<dbReference type="EMBL" id="U75446">
    <property type="protein sequence ID" value="AAC49694.1"/>
    <property type="molecule type" value="Genomic_DNA"/>
</dbReference>
<dbReference type="EMBL" id="CU329671">
    <property type="protein sequence ID" value="CAA22533.1"/>
    <property type="molecule type" value="Genomic_DNA"/>
</dbReference>
<dbReference type="PIR" id="T40625">
    <property type="entry name" value="T40625"/>
</dbReference>
<dbReference type="RefSeq" id="NP_595092.1">
    <property type="nucleotide sequence ID" value="NM_001020999.2"/>
</dbReference>
<dbReference type="SMR" id="Q92372"/>
<dbReference type="BioGRID" id="277673">
    <property type="interactions" value="28"/>
</dbReference>
<dbReference type="DIP" id="DIP-29237N"/>
<dbReference type="FunCoup" id="Q92372">
    <property type="interactions" value="822"/>
</dbReference>
<dbReference type="IntAct" id="Q92372">
    <property type="interactions" value="4"/>
</dbReference>
<dbReference type="STRING" id="284812.Q92372"/>
<dbReference type="iPTMnet" id="Q92372"/>
<dbReference type="PaxDb" id="4896-SPBC660.13c.1"/>
<dbReference type="EnsemblFungi" id="SPBC660.13c.1">
    <property type="protein sequence ID" value="SPBC660.13c.1:pep"/>
    <property type="gene ID" value="SPBC660.13c"/>
</dbReference>
<dbReference type="GeneID" id="2541158"/>
<dbReference type="KEGG" id="spo:2541158"/>
<dbReference type="PomBase" id="SPBC660.13c">
    <property type="gene designation" value="ssb1"/>
</dbReference>
<dbReference type="VEuPathDB" id="FungiDB:SPBC660.13c"/>
<dbReference type="eggNOG" id="KOG0851">
    <property type="taxonomic scope" value="Eukaryota"/>
</dbReference>
<dbReference type="HOGENOM" id="CLU_012393_2_0_1"/>
<dbReference type="InParanoid" id="Q92372"/>
<dbReference type="OMA" id="DQCDAFY"/>
<dbReference type="PhylomeDB" id="Q92372"/>
<dbReference type="Reactome" id="R-SPO-110312">
    <property type="pathway name" value="Translesion synthesis by REV1"/>
</dbReference>
<dbReference type="Reactome" id="R-SPO-110314">
    <property type="pathway name" value="Recognition of DNA damage by PCNA-containing replication complex"/>
</dbReference>
<dbReference type="Reactome" id="R-SPO-110320">
    <property type="pathway name" value="Translesion Synthesis by POLH"/>
</dbReference>
<dbReference type="Reactome" id="R-SPO-174437">
    <property type="pathway name" value="Removal of the Flap Intermediate from the C-strand"/>
</dbReference>
<dbReference type="Reactome" id="R-SPO-176187">
    <property type="pathway name" value="Activation of ATR in response to replication stress"/>
</dbReference>
<dbReference type="Reactome" id="R-SPO-3371453">
    <property type="pathway name" value="Regulation of HSF1-mediated heat shock response"/>
</dbReference>
<dbReference type="Reactome" id="R-SPO-5358565">
    <property type="pathway name" value="Mismatch repair (MMR) directed by MSH2:MSH6 (MutSalpha)"/>
</dbReference>
<dbReference type="Reactome" id="R-SPO-5358606">
    <property type="pathway name" value="Mismatch repair (MMR) directed by MSH2:MSH3 (MutSbeta)"/>
</dbReference>
<dbReference type="Reactome" id="R-SPO-5651801">
    <property type="pathway name" value="PCNA-Dependent Long Patch Base Excision Repair"/>
</dbReference>
<dbReference type="Reactome" id="R-SPO-5655862">
    <property type="pathway name" value="Translesion synthesis by POLK"/>
</dbReference>
<dbReference type="Reactome" id="R-SPO-5656121">
    <property type="pathway name" value="Translesion synthesis by POLI"/>
</dbReference>
<dbReference type="Reactome" id="R-SPO-5656169">
    <property type="pathway name" value="Termination of translesion DNA synthesis"/>
</dbReference>
<dbReference type="Reactome" id="R-SPO-5696395">
    <property type="pathway name" value="Formation of Incision Complex in GG-NER"/>
</dbReference>
<dbReference type="Reactome" id="R-SPO-5696397">
    <property type="pathway name" value="Gap-filling DNA repair synthesis and ligation in GG-NER"/>
</dbReference>
<dbReference type="Reactome" id="R-SPO-5696400">
    <property type="pathway name" value="Dual Incision in GG-NER"/>
</dbReference>
<dbReference type="Reactome" id="R-SPO-6782135">
    <property type="pathway name" value="Dual incision in TC-NER"/>
</dbReference>
<dbReference type="Reactome" id="R-SPO-6782210">
    <property type="pathway name" value="Gap-filling DNA repair synthesis and ligation in TC-NER"/>
</dbReference>
<dbReference type="Reactome" id="R-SPO-68962">
    <property type="pathway name" value="Activation of the pre-replicative complex"/>
</dbReference>
<dbReference type="Reactome" id="R-SPO-69166">
    <property type="pathway name" value="Removal of the Flap Intermediate"/>
</dbReference>
<dbReference type="PRO" id="PR:Q92372"/>
<dbReference type="Proteomes" id="UP000002485">
    <property type="component" value="Chromosome II"/>
</dbReference>
<dbReference type="GO" id="GO:0000785">
    <property type="term" value="C:chromatin"/>
    <property type="evidence" value="ECO:0000314"/>
    <property type="project" value="PomBase"/>
</dbReference>
<dbReference type="GO" id="GO:0140445">
    <property type="term" value="C:chromosome, telomeric repeat region"/>
    <property type="evidence" value="ECO:0000314"/>
    <property type="project" value="PomBase"/>
</dbReference>
<dbReference type="GO" id="GO:0005737">
    <property type="term" value="C:cytoplasm"/>
    <property type="evidence" value="ECO:0007005"/>
    <property type="project" value="PomBase"/>
</dbReference>
<dbReference type="GO" id="GO:0005829">
    <property type="term" value="C:cytosol"/>
    <property type="evidence" value="ECO:0007005"/>
    <property type="project" value="PomBase"/>
</dbReference>
<dbReference type="GO" id="GO:0005662">
    <property type="term" value="C:DNA replication factor A complex"/>
    <property type="evidence" value="ECO:0000314"/>
    <property type="project" value="PomBase"/>
</dbReference>
<dbReference type="GO" id="GO:0005634">
    <property type="term" value="C:nucleus"/>
    <property type="evidence" value="ECO:0007005"/>
    <property type="project" value="PomBase"/>
</dbReference>
<dbReference type="GO" id="GO:0090734">
    <property type="term" value="C:site of DNA damage"/>
    <property type="evidence" value="ECO:0000314"/>
    <property type="project" value="PomBase"/>
</dbReference>
<dbReference type="GO" id="GO:0035861">
    <property type="term" value="C:site of double-strand break"/>
    <property type="evidence" value="ECO:0000314"/>
    <property type="project" value="PomBase"/>
</dbReference>
<dbReference type="GO" id="GO:0003684">
    <property type="term" value="F:damaged DNA binding"/>
    <property type="evidence" value="ECO:0000318"/>
    <property type="project" value="GO_Central"/>
</dbReference>
<dbReference type="GO" id="GO:0003697">
    <property type="term" value="F:single-stranded DNA binding"/>
    <property type="evidence" value="ECO:0000269"/>
    <property type="project" value="PomBase"/>
</dbReference>
<dbReference type="GO" id="GO:0043047">
    <property type="term" value="F:single-stranded telomeric DNA binding"/>
    <property type="evidence" value="ECO:0000269"/>
    <property type="project" value="PomBase"/>
</dbReference>
<dbReference type="GO" id="GO:0070034">
    <property type="term" value="F:telomerase RNA binding"/>
    <property type="evidence" value="ECO:0000269"/>
    <property type="project" value="PomBase"/>
</dbReference>
<dbReference type="GO" id="GO:0042162">
    <property type="term" value="F:telomeric DNA binding"/>
    <property type="evidence" value="ECO:0000269"/>
    <property type="project" value="PomBase"/>
</dbReference>
<dbReference type="GO" id="GO:0008270">
    <property type="term" value="F:zinc ion binding"/>
    <property type="evidence" value="ECO:0007669"/>
    <property type="project" value="UniProtKB-KW"/>
</dbReference>
<dbReference type="GO" id="GO:0006281">
    <property type="term" value="P:DNA repair"/>
    <property type="evidence" value="ECO:0000315"/>
    <property type="project" value="PomBase"/>
</dbReference>
<dbReference type="GO" id="GO:0006260">
    <property type="term" value="P:DNA replication"/>
    <property type="evidence" value="ECO:0000250"/>
    <property type="project" value="UniProtKB"/>
</dbReference>
<dbReference type="GO" id="GO:0000724">
    <property type="term" value="P:double-strand break repair via homologous recombination"/>
    <property type="evidence" value="ECO:0000318"/>
    <property type="project" value="GO_Central"/>
</dbReference>
<dbReference type="GO" id="GO:0051321">
    <property type="term" value="P:meiotic cell cycle"/>
    <property type="evidence" value="ECO:0000318"/>
    <property type="project" value="GO_Central"/>
</dbReference>
<dbReference type="GO" id="GO:0033260">
    <property type="term" value="P:nuclear DNA replication"/>
    <property type="evidence" value="ECO:0000315"/>
    <property type="project" value="PomBase"/>
</dbReference>
<dbReference type="GO" id="GO:0006289">
    <property type="term" value="P:nucleotide-excision repair"/>
    <property type="evidence" value="ECO:0000318"/>
    <property type="project" value="GO_Central"/>
</dbReference>
<dbReference type="GO" id="GO:0000723">
    <property type="term" value="P:telomere maintenance"/>
    <property type="evidence" value="ECO:0000315"/>
    <property type="project" value="PomBase"/>
</dbReference>
<dbReference type="GO" id="GO:0007004">
    <property type="term" value="P:telomere maintenance via telomerase"/>
    <property type="evidence" value="ECO:0000315"/>
    <property type="project" value="PomBase"/>
</dbReference>
<dbReference type="CDD" id="cd04474">
    <property type="entry name" value="RPA1_DBD_A"/>
    <property type="match status" value="1"/>
</dbReference>
<dbReference type="CDD" id="cd04475">
    <property type="entry name" value="RPA1_DBD_B"/>
    <property type="match status" value="1"/>
</dbReference>
<dbReference type="CDD" id="cd04476">
    <property type="entry name" value="RPA1_DBD_C"/>
    <property type="match status" value="1"/>
</dbReference>
<dbReference type="CDD" id="cd04477">
    <property type="entry name" value="RPA1N"/>
    <property type="match status" value="1"/>
</dbReference>
<dbReference type="FunFam" id="2.40.50.140:FF:000041">
    <property type="entry name" value="Replication protein A subunit"/>
    <property type="match status" value="1"/>
</dbReference>
<dbReference type="FunFam" id="2.40.50.140:FF:000064">
    <property type="entry name" value="Replication protein A subunit"/>
    <property type="match status" value="1"/>
</dbReference>
<dbReference type="FunFam" id="2.40.50.140:FF:000090">
    <property type="entry name" value="Replication protein A subunit"/>
    <property type="match status" value="1"/>
</dbReference>
<dbReference type="FunFam" id="2.40.50.140:FF:000117">
    <property type="entry name" value="Replication protein A subunit"/>
    <property type="match status" value="1"/>
</dbReference>
<dbReference type="Gene3D" id="2.40.50.140">
    <property type="entry name" value="Nucleic acid-binding proteins"/>
    <property type="match status" value="4"/>
</dbReference>
<dbReference type="InterPro" id="IPR047192">
    <property type="entry name" value="Euk_RPA1_DBD_C"/>
</dbReference>
<dbReference type="InterPro" id="IPR012340">
    <property type="entry name" value="NA-bd_OB-fold"/>
</dbReference>
<dbReference type="InterPro" id="IPR004365">
    <property type="entry name" value="NA-bd_OB_tRNA"/>
</dbReference>
<dbReference type="InterPro" id="IPR013955">
    <property type="entry name" value="Rep_factor-A_C"/>
</dbReference>
<dbReference type="InterPro" id="IPR007199">
    <property type="entry name" value="Rep_factor-A_N"/>
</dbReference>
<dbReference type="InterPro" id="IPR031657">
    <property type="entry name" value="REPA_OB_2"/>
</dbReference>
<dbReference type="InterPro" id="IPR004591">
    <property type="entry name" value="Rfa1"/>
</dbReference>
<dbReference type="NCBIfam" id="TIGR00617">
    <property type="entry name" value="rpa1"/>
    <property type="match status" value="1"/>
</dbReference>
<dbReference type="PANTHER" id="PTHR47165">
    <property type="entry name" value="OS03G0429900 PROTEIN"/>
    <property type="match status" value="1"/>
</dbReference>
<dbReference type="PANTHER" id="PTHR47165:SF4">
    <property type="entry name" value="OS03G0429900 PROTEIN"/>
    <property type="match status" value="1"/>
</dbReference>
<dbReference type="Pfam" id="PF04057">
    <property type="entry name" value="Rep-A_N"/>
    <property type="match status" value="1"/>
</dbReference>
<dbReference type="Pfam" id="PF08646">
    <property type="entry name" value="Rep_fac-A_C"/>
    <property type="match status" value="1"/>
</dbReference>
<dbReference type="Pfam" id="PF16900">
    <property type="entry name" value="REPA_OB_2"/>
    <property type="match status" value="1"/>
</dbReference>
<dbReference type="Pfam" id="PF01336">
    <property type="entry name" value="tRNA_anti-codon"/>
    <property type="match status" value="1"/>
</dbReference>
<dbReference type="SUPFAM" id="SSF50249">
    <property type="entry name" value="Nucleic acid-binding proteins"/>
    <property type="match status" value="4"/>
</dbReference>
<sequence length="609" mass="68197">MAERLSVGALRIINTSDASSFPPNPILQVLTVKELNSNPTSGAPKRYRVVLSDSINYAQSMLSTQLNHLVAENKLQKGAFVQLTQFTVNVMKERKILIVLGLNVLTELGVMDKIGNPAGLETVDALRQQQNEQNNASAPRTGISTSTNSFYGNNAAATAPAPPPMMKKPAAPNSLSTIIYPIEGLSPYQNKWTIRARVTNKSEVKHWHNQRGEGKLFSVNLLDESGEIRATGFNDQVDAFYDILQEGSVYYISRCRVNIAKKQYTNVQNEYELMFERDTEIRKAEDQTAVPVAKFSFVSLQEVGDVAKDAVIDVIGVLQNVGPVQQITSRATSRGFDKRDITIVDQTGYEMRVTLWGKTAIEFSVSEESILAFKGVKVNDFQGRSLSMLTSSTMSVDPDIQESHLLKGWYDGQGRGQEFAKHSVISSTLSTTGRSAERKNIAEVQAEHLGMSETPDYFSLKGTIVYIRKKNVSYPACPAADCNKKVFDQGGSWRCEKCNKEYDAPQYRYIITIAVGDHTGQLWLNVFDDVGKLIMHKTADELNDLQENDENAFMNCMAEACYMPYIFQCRAKQDNFKGEMRVRYTVMSINQMDWKEESKRLINFIESAQ</sequence>
<feature type="chain" id="PRO_0000097266" description="Replication factor A protein 1">
    <location>
        <begin position="1"/>
        <end position="609"/>
    </location>
</feature>
<feature type="DNA-binding region" description="OB">
    <location>
        <begin position="192"/>
        <end position="278"/>
    </location>
</feature>
<feature type="zinc finger region" description="C4-type" evidence="2">
    <location>
        <begin position="477"/>
        <end position="498"/>
    </location>
</feature>
<feature type="region of interest" description="Disordered" evidence="3">
    <location>
        <begin position="130"/>
        <end position="166"/>
    </location>
</feature>
<feature type="compositionally biased region" description="Polar residues" evidence="3">
    <location>
        <begin position="130"/>
        <end position="152"/>
    </location>
</feature>